<accession>Q0TNC2</accession>
<feature type="chain" id="PRO_0000302639" description="ATP synthase subunit alpha">
    <location>
        <begin position="1"/>
        <end position="502"/>
    </location>
</feature>
<feature type="binding site" evidence="1">
    <location>
        <begin position="169"/>
        <end position="176"/>
    </location>
    <ligand>
        <name>ATP</name>
        <dbReference type="ChEBI" id="CHEBI:30616"/>
    </ligand>
</feature>
<feature type="site" description="Required for activity" evidence="1">
    <location>
        <position position="362"/>
    </location>
</feature>
<dbReference type="EC" id="7.1.2.2" evidence="1"/>
<dbReference type="EMBL" id="CP000246">
    <property type="protein sequence ID" value="ABG83534.1"/>
    <property type="molecule type" value="Genomic_DNA"/>
</dbReference>
<dbReference type="RefSeq" id="WP_003452357.1">
    <property type="nucleotide sequence ID" value="NC_008261.1"/>
</dbReference>
<dbReference type="SMR" id="Q0TNC2"/>
<dbReference type="STRING" id="195103.CPF_2454"/>
<dbReference type="PaxDb" id="195103-CPF_2454"/>
<dbReference type="GeneID" id="93001268"/>
<dbReference type="KEGG" id="cpf:CPF_2454"/>
<dbReference type="eggNOG" id="COG0056">
    <property type="taxonomic scope" value="Bacteria"/>
</dbReference>
<dbReference type="HOGENOM" id="CLU_010091_2_1_9"/>
<dbReference type="Proteomes" id="UP000001823">
    <property type="component" value="Chromosome"/>
</dbReference>
<dbReference type="GO" id="GO:0005886">
    <property type="term" value="C:plasma membrane"/>
    <property type="evidence" value="ECO:0007669"/>
    <property type="project" value="UniProtKB-SubCell"/>
</dbReference>
<dbReference type="GO" id="GO:0045259">
    <property type="term" value="C:proton-transporting ATP synthase complex"/>
    <property type="evidence" value="ECO:0007669"/>
    <property type="project" value="UniProtKB-KW"/>
</dbReference>
<dbReference type="GO" id="GO:0043531">
    <property type="term" value="F:ADP binding"/>
    <property type="evidence" value="ECO:0007669"/>
    <property type="project" value="TreeGrafter"/>
</dbReference>
<dbReference type="GO" id="GO:0005524">
    <property type="term" value="F:ATP binding"/>
    <property type="evidence" value="ECO:0007669"/>
    <property type="project" value="UniProtKB-UniRule"/>
</dbReference>
<dbReference type="GO" id="GO:0046933">
    <property type="term" value="F:proton-transporting ATP synthase activity, rotational mechanism"/>
    <property type="evidence" value="ECO:0007669"/>
    <property type="project" value="UniProtKB-UniRule"/>
</dbReference>
<dbReference type="CDD" id="cd18113">
    <property type="entry name" value="ATP-synt_F1_alpha_C"/>
    <property type="match status" value="1"/>
</dbReference>
<dbReference type="CDD" id="cd18116">
    <property type="entry name" value="ATP-synt_F1_alpha_N"/>
    <property type="match status" value="1"/>
</dbReference>
<dbReference type="CDD" id="cd01132">
    <property type="entry name" value="F1-ATPase_alpha_CD"/>
    <property type="match status" value="1"/>
</dbReference>
<dbReference type="FunFam" id="1.20.150.20:FF:000001">
    <property type="entry name" value="ATP synthase subunit alpha"/>
    <property type="match status" value="1"/>
</dbReference>
<dbReference type="FunFam" id="2.40.30.20:FF:000001">
    <property type="entry name" value="ATP synthase subunit alpha"/>
    <property type="match status" value="1"/>
</dbReference>
<dbReference type="FunFam" id="3.40.50.300:FF:000002">
    <property type="entry name" value="ATP synthase subunit alpha"/>
    <property type="match status" value="1"/>
</dbReference>
<dbReference type="Gene3D" id="2.40.30.20">
    <property type="match status" value="1"/>
</dbReference>
<dbReference type="Gene3D" id="1.20.150.20">
    <property type="entry name" value="ATP synthase alpha/beta chain, C-terminal domain"/>
    <property type="match status" value="1"/>
</dbReference>
<dbReference type="Gene3D" id="3.40.50.300">
    <property type="entry name" value="P-loop containing nucleotide triphosphate hydrolases"/>
    <property type="match status" value="1"/>
</dbReference>
<dbReference type="HAMAP" id="MF_01346">
    <property type="entry name" value="ATP_synth_alpha_bact"/>
    <property type="match status" value="1"/>
</dbReference>
<dbReference type="InterPro" id="IPR023366">
    <property type="entry name" value="ATP_synth_asu-like_sf"/>
</dbReference>
<dbReference type="InterPro" id="IPR000793">
    <property type="entry name" value="ATP_synth_asu_C"/>
</dbReference>
<dbReference type="InterPro" id="IPR038376">
    <property type="entry name" value="ATP_synth_asu_C_sf"/>
</dbReference>
<dbReference type="InterPro" id="IPR033732">
    <property type="entry name" value="ATP_synth_F1_a_nt-bd_dom"/>
</dbReference>
<dbReference type="InterPro" id="IPR005294">
    <property type="entry name" value="ATP_synth_F1_asu"/>
</dbReference>
<dbReference type="InterPro" id="IPR020003">
    <property type="entry name" value="ATPase_a/bsu_AS"/>
</dbReference>
<dbReference type="InterPro" id="IPR004100">
    <property type="entry name" value="ATPase_F1/V1/A1_a/bsu_N"/>
</dbReference>
<dbReference type="InterPro" id="IPR036121">
    <property type="entry name" value="ATPase_F1/V1/A1_a/bsu_N_sf"/>
</dbReference>
<dbReference type="InterPro" id="IPR000194">
    <property type="entry name" value="ATPase_F1/V1/A1_a/bsu_nucl-bd"/>
</dbReference>
<dbReference type="InterPro" id="IPR027417">
    <property type="entry name" value="P-loop_NTPase"/>
</dbReference>
<dbReference type="NCBIfam" id="TIGR00962">
    <property type="entry name" value="atpA"/>
    <property type="match status" value="1"/>
</dbReference>
<dbReference type="NCBIfam" id="NF009884">
    <property type="entry name" value="PRK13343.1"/>
    <property type="match status" value="1"/>
</dbReference>
<dbReference type="PANTHER" id="PTHR48082">
    <property type="entry name" value="ATP SYNTHASE SUBUNIT ALPHA, MITOCHONDRIAL"/>
    <property type="match status" value="1"/>
</dbReference>
<dbReference type="PANTHER" id="PTHR48082:SF2">
    <property type="entry name" value="ATP SYNTHASE SUBUNIT ALPHA, MITOCHONDRIAL"/>
    <property type="match status" value="1"/>
</dbReference>
<dbReference type="Pfam" id="PF00006">
    <property type="entry name" value="ATP-synt_ab"/>
    <property type="match status" value="1"/>
</dbReference>
<dbReference type="Pfam" id="PF00306">
    <property type="entry name" value="ATP-synt_ab_C"/>
    <property type="match status" value="1"/>
</dbReference>
<dbReference type="Pfam" id="PF02874">
    <property type="entry name" value="ATP-synt_ab_N"/>
    <property type="match status" value="1"/>
</dbReference>
<dbReference type="PIRSF" id="PIRSF039088">
    <property type="entry name" value="F_ATPase_subunit_alpha"/>
    <property type="match status" value="1"/>
</dbReference>
<dbReference type="SUPFAM" id="SSF47917">
    <property type="entry name" value="C-terminal domain of alpha and beta subunits of F1 ATP synthase"/>
    <property type="match status" value="1"/>
</dbReference>
<dbReference type="SUPFAM" id="SSF50615">
    <property type="entry name" value="N-terminal domain of alpha and beta subunits of F1 ATP synthase"/>
    <property type="match status" value="1"/>
</dbReference>
<dbReference type="SUPFAM" id="SSF52540">
    <property type="entry name" value="P-loop containing nucleoside triphosphate hydrolases"/>
    <property type="match status" value="1"/>
</dbReference>
<dbReference type="PROSITE" id="PS00152">
    <property type="entry name" value="ATPASE_ALPHA_BETA"/>
    <property type="match status" value="1"/>
</dbReference>
<name>ATPA_CLOP1</name>
<evidence type="ECO:0000255" key="1">
    <source>
        <dbReference type="HAMAP-Rule" id="MF_01346"/>
    </source>
</evidence>
<gene>
    <name evidence="1" type="primary">atpA</name>
    <name type="ordered locus">CPF_2454</name>
</gene>
<comment type="function">
    <text evidence="1">Produces ATP from ADP in the presence of a proton gradient across the membrane. The alpha chain is a regulatory subunit.</text>
</comment>
<comment type="catalytic activity">
    <reaction evidence="1">
        <text>ATP + H2O + 4 H(+)(in) = ADP + phosphate + 5 H(+)(out)</text>
        <dbReference type="Rhea" id="RHEA:57720"/>
        <dbReference type="ChEBI" id="CHEBI:15377"/>
        <dbReference type="ChEBI" id="CHEBI:15378"/>
        <dbReference type="ChEBI" id="CHEBI:30616"/>
        <dbReference type="ChEBI" id="CHEBI:43474"/>
        <dbReference type="ChEBI" id="CHEBI:456216"/>
        <dbReference type="EC" id="7.1.2.2"/>
    </reaction>
</comment>
<comment type="subunit">
    <text evidence="1">F-type ATPases have 2 components, CF(1) - the catalytic core - and CF(0) - the membrane proton channel. CF(1) has five subunits: alpha(3), beta(3), gamma(1), delta(1), epsilon(1). CF(0) has three main subunits: a(1), b(2) and c(9-12). The alpha and beta chains form an alternating ring which encloses part of the gamma chain. CF(1) is attached to CF(0) by a central stalk formed by the gamma and epsilon chains, while a peripheral stalk is formed by the delta and b chains.</text>
</comment>
<comment type="subcellular location">
    <subcellularLocation>
        <location evidence="1">Cell membrane</location>
        <topology evidence="1">Peripheral membrane protein</topology>
    </subcellularLocation>
</comment>
<comment type="similarity">
    <text evidence="1">Belongs to the ATPase alpha/beta chains family.</text>
</comment>
<organism>
    <name type="scientific">Clostridium perfringens (strain ATCC 13124 / DSM 756 / JCM 1290 / NCIMB 6125 / NCTC 8237 / Type A)</name>
    <dbReference type="NCBI Taxonomy" id="195103"/>
    <lineage>
        <taxon>Bacteria</taxon>
        <taxon>Bacillati</taxon>
        <taxon>Bacillota</taxon>
        <taxon>Clostridia</taxon>
        <taxon>Eubacteriales</taxon>
        <taxon>Clostridiaceae</taxon>
        <taxon>Clostridium</taxon>
    </lineage>
</organism>
<sequence length="502" mass="55266">MHIKPEEITSIIKNEIKNYEKELETVDSGTIIQIGDGVARVYGLEECMEGELLEFPNQVFGMALNLEQDNVGCVLLGSEEGIKEGDIVKRTGKIVEVPVGEDLIGRVVNSLGQPIDGKGPIKNDGYRAIEVPAPGILERSSVNEPLQTGIKAIDSMIPIGRGQRELIIGDRQTGKTAIAIDTIINQKGKDVICIYVAIGQKQSTVANIVNTLTEEGAMDYSIVVTASASESAPLQYIAPYSGCTMGEYFMNKGKHVLIIYDDLSKHAVAYRTMSLLIRRPPGREAYPGDVFYIHSRLLERAAKLSKENGGGSLTALPIIETLAGDVTAYIPTNVISITDGQIFLETELFNAGQRPAVNPGISVSRVGGNAQIKAMKQVSGTLRLELAQYRELASFAQFGSDLDKDTQARLEKGKRLIEILKQDQYKPMAVEKQIMIIYAAVNNFLLDIKVSDIKRFEKEFLEYMDTHHREIGKAILDKKVLDDELKSALESAIVEFKKIFLM</sequence>
<proteinExistence type="inferred from homology"/>
<keyword id="KW-0066">ATP synthesis</keyword>
<keyword id="KW-0067">ATP-binding</keyword>
<keyword id="KW-1003">Cell membrane</keyword>
<keyword id="KW-0139">CF(1)</keyword>
<keyword id="KW-0375">Hydrogen ion transport</keyword>
<keyword id="KW-0406">Ion transport</keyword>
<keyword id="KW-0472">Membrane</keyword>
<keyword id="KW-0547">Nucleotide-binding</keyword>
<keyword id="KW-1278">Translocase</keyword>
<keyword id="KW-0813">Transport</keyword>
<reference key="1">
    <citation type="journal article" date="2006" name="Genome Res.">
        <title>Skewed genomic variability in strains of the toxigenic bacterial pathogen, Clostridium perfringens.</title>
        <authorList>
            <person name="Myers G.S.A."/>
            <person name="Rasko D.A."/>
            <person name="Cheung J.K."/>
            <person name="Ravel J."/>
            <person name="Seshadri R."/>
            <person name="DeBoy R.T."/>
            <person name="Ren Q."/>
            <person name="Varga J."/>
            <person name="Awad M.M."/>
            <person name="Brinkac L.M."/>
            <person name="Daugherty S.C."/>
            <person name="Haft D.H."/>
            <person name="Dodson R.J."/>
            <person name="Madupu R."/>
            <person name="Nelson W.C."/>
            <person name="Rosovitz M.J."/>
            <person name="Sullivan S.A."/>
            <person name="Khouri H."/>
            <person name="Dimitrov G.I."/>
            <person name="Watkins K.L."/>
            <person name="Mulligan S."/>
            <person name="Benton J."/>
            <person name="Radune D."/>
            <person name="Fisher D.J."/>
            <person name="Atkins H.S."/>
            <person name="Hiscox T."/>
            <person name="Jost B.H."/>
            <person name="Billington S.J."/>
            <person name="Songer J.G."/>
            <person name="McClane B.A."/>
            <person name="Titball R.W."/>
            <person name="Rood J.I."/>
            <person name="Melville S.B."/>
            <person name="Paulsen I.T."/>
        </authorList>
    </citation>
    <scope>NUCLEOTIDE SEQUENCE [LARGE SCALE GENOMIC DNA]</scope>
    <source>
        <strain>ATCC 13124 / DSM 756 / JCM 1290 / NCIMB 6125 / NCTC 8237 / S 107 / Type A</strain>
    </source>
</reference>
<protein>
    <recommendedName>
        <fullName evidence="1">ATP synthase subunit alpha</fullName>
        <ecNumber evidence="1">7.1.2.2</ecNumber>
    </recommendedName>
    <alternativeName>
        <fullName evidence="1">ATP synthase F1 sector subunit alpha</fullName>
    </alternativeName>
    <alternativeName>
        <fullName evidence="1">F-ATPase subunit alpha</fullName>
    </alternativeName>
</protein>